<proteinExistence type="inferred from homology"/>
<feature type="chain" id="PRO_0000189510" description="2-C-methyl-D-erythritol 2,4-cyclodiphosphate synthase">
    <location>
        <begin position="1"/>
        <end position="152"/>
    </location>
</feature>
<feature type="binding site" evidence="1">
    <location>
        <begin position="8"/>
        <end position="10"/>
    </location>
    <ligand>
        <name>4-CDP-2-C-methyl-D-erythritol 2-phosphate</name>
        <dbReference type="ChEBI" id="CHEBI:57919"/>
    </ligand>
</feature>
<feature type="binding site" evidence="1">
    <location>
        <position position="8"/>
    </location>
    <ligand>
        <name>a divalent metal cation</name>
        <dbReference type="ChEBI" id="CHEBI:60240"/>
    </ligand>
</feature>
<feature type="binding site" evidence="1">
    <location>
        <position position="10"/>
    </location>
    <ligand>
        <name>a divalent metal cation</name>
        <dbReference type="ChEBI" id="CHEBI:60240"/>
    </ligand>
</feature>
<feature type="binding site" evidence="1">
    <location>
        <begin position="34"/>
        <end position="35"/>
    </location>
    <ligand>
        <name>4-CDP-2-C-methyl-D-erythritol 2-phosphate</name>
        <dbReference type="ChEBI" id="CHEBI:57919"/>
    </ligand>
</feature>
<feature type="binding site" evidence="1">
    <location>
        <position position="42"/>
    </location>
    <ligand>
        <name>a divalent metal cation</name>
        <dbReference type="ChEBI" id="CHEBI:60240"/>
    </ligand>
</feature>
<feature type="binding site" evidence="1">
    <location>
        <begin position="56"/>
        <end position="58"/>
    </location>
    <ligand>
        <name>4-CDP-2-C-methyl-D-erythritol 2-phosphate</name>
        <dbReference type="ChEBI" id="CHEBI:57919"/>
    </ligand>
</feature>
<feature type="binding site" evidence="1">
    <location>
        <begin position="61"/>
        <end position="65"/>
    </location>
    <ligand>
        <name>4-CDP-2-C-methyl-D-erythritol 2-phosphate</name>
        <dbReference type="ChEBI" id="CHEBI:57919"/>
    </ligand>
</feature>
<feature type="site" description="Transition state stabilizer" evidence="1">
    <location>
        <position position="34"/>
    </location>
</feature>
<feature type="site" description="Transition state stabilizer" evidence="1">
    <location>
        <position position="133"/>
    </location>
</feature>
<gene>
    <name evidence="1" type="primary">ispF</name>
    <name type="ordered locus">TT_C1438</name>
</gene>
<dbReference type="EC" id="4.6.1.12" evidence="1"/>
<dbReference type="EMBL" id="AE017221">
    <property type="protein sequence ID" value="AAS81780.1"/>
    <property type="molecule type" value="Genomic_DNA"/>
</dbReference>
<dbReference type="RefSeq" id="WP_011173816.1">
    <property type="nucleotide sequence ID" value="NC_005835.1"/>
</dbReference>
<dbReference type="SMR" id="Q72HP8"/>
<dbReference type="KEGG" id="tth:TT_C1438"/>
<dbReference type="eggNOG" id="COG0245">
    <property type="taxonomic scope" value="Bacteria"/>
</dbReference>
<dbReference type="HOGENOM" id="CLU_084630_2_1_0"/>
<dbReference type="OrthoDB" id="9804336at2"/>
<dbReference type="UniPathway" id="UPA00056">
    <property type="reaction ID" value="UER00095"/>
</dbReference>
<dbReference type="Proteomes" id="UP000000592">
    <property type="component" value="Chromosome"/>
</dbReference>
<dbReference type="GO" id="GO:0008685">
    <property type="term" value="F:2-C-methyl-D-erythritol 2,4-cyclodiphosphate synthase activity"/>
    <property type="evidence" value="ECO:0007669"/>
    <property type="project" value="UniProtKB-UniRule"/>
</dbReference>
<dbReference type="GO" id="GO:0046872">
    <property type="term" value="F:metal ion binding"/>
    <property type="evidence" value="ECO:0007669"/>
    <property type="project" value="UniProtKB-KW"/>
</dbReference>
<dbReference type="GO" id="GO:0019288">
    <property type="term" value="P:isopentenyl diphosphate biosynthetic process, methylerythritol 4-phosphate pathway"/>
    <property type="evidence" value="ECO:0007669"/>
    <property type="project" value="UniProtKB-UniRule"/>
</dbReference>
<dbReference type="GO" id="GO:0016114">
    <property type="term" value="P:terpenoid biosynthetic process"/>
    <property type="evidence" value="ECO:0007669"/>
    <property type="project" value="InterPro"/>
</dbReference>
<dbReference type="CDD" id="cd00554">
    <property type="entry name" value="MECDP_synthase"/>
    <property type="match status" value="1"/>
</dbReference>
<dbReference type="Gene3D" id="3.30.1330.50">
    <property type="entry name" value="2-C-methyl-D-erythritol 2,4-cyclodiphosphate synthase"/>
    <property type="match status" value="1"/>
</dbReference>
<dbReference type="HAMAP" id="MF_00107">
    <property type="entry name" value="IspF"/>
    <property type="match status" value="1"/>
</dbReference>
<dbReference type="InterPro" id="IPR003526">
    <property type="entry name" value="MECDP_synthase"/>
</dbReference>
<dbReference type="InterPro" id="IPR020555">
    <property type="entry name" value="MECDP_synthase_CS"/>
</dbReference>
<dbReference type="InterPro" id="IPR036571">
    <property type="entry name" value="MECDP_synthase_sf"/>
</dbReference>
<dbReference type="NCBIfam" id="TIGR00151">
    <property type="entry name" value="ispF"/>
    <property type="match status" value="1"/>
</dbReference>
<dbReference type="PANTHER" id="PTHR43181">
    <property type="entry name" value="2-C-METHYL-D-ERYTHRITOL 2,4-CYCLODIPHOSPHATE SYNTHASE, CHLOROPLASTIC"/>
    <property type="match status" value="1"/>
</dbReference>
<dbReference type="PANTHER" id="PTHR43181:SF1">
    <property type="entry name" value="2-C-METHYL-D-ERYTHRITOL 2,4-CYCLODIPHOSPHATE SYNTHASE, CHLOROPLASTIC"/>
    <property type="match status" value="1"/>
</dbReference>
<dbReference type="Pfam" id="PF02542">
    <property type="entry name" value="YgbB"/>
    <property type="match status" value="1"/>
</dbReference>
<dbReference type="SUPFAM" id="SSF69765">
    <property type="entry name" value="IpsF-like"/>
    <property type="match status" value="1"/>
</dbReference>
<dbReference type="PROSITE" id="PS01350">
    <property type="entry name" value="ISPF"/>
    <property type="match status" value="1"/>
</dbReference>
<keyword id="KW-0414">Isoprene biosynthesis</keyword>
<keyword id="KW-0456">Lyase</keyword>
<keyword id="KW-0479">Metal-binding</keyword>
<accession>Q72HP8</accession>
<reference key="1">
    <citation type="journal article" date="2004" name="Nat. Biotechnol.">
        <title>The genome sequence of the extreme thermophile Thermus thermophilus.</title>
        <authorList>
            <person name="Henne A."/>
            <person name="Brueggemann H."/>
            <person name="Raasch C."/>
            <person name="Wiezer A."/>
            <person name="Hartsch T."/>
            <person name="Liesegang H."/>
            <person name="Johann A."/>
            <person name="Lienard T."/>
            <person name="Gohl O."/>
            <person name="Martinez-Arias R."/>
            <person name="Jacobi C."/>
            <person name="Starkuviene V."/>
            <person name="Schlenczeck S."/>
            <person name="Dencker S."/>
            <person name="Huber R."/>
            <person name="Klenk H.-P."/>
            <person name="Kramer W."/>
            <person name="Merkl R."/>
            <person name="Gottschalk G."/>
            <person name="Fritz H.-J."/>
        </authorList>
    </citation>
    <scope>NUCLEOTIDE SEQUENCE [LARGE SCALE GENOMIC DNA]</scope>
    <source>
        <strain>ATCC BAA-163 / DSM 7039 / HB27</strain>
    </source>
</reference>
<name>ISPF_THET2</name>
<comment type="function">
    <text evidence="1">Involved in the biosynthesis of isopentenyl diphosphate (IPP) and dimethylallyl diphosphate (DMAPP), two major building blocks of isoprenoid compounds. Catalyzes the conversion of 4-diphosphocytidyl-2-C-methyl-D-erythritol 2-phosphate (CDP-ME2P) to 2-C-methyl-D-erythritol 2,4-cyclodiphosphate (ME-CPP) with a corresponding release of cytidine 5-monophosphate (CMP).</text>
</comment>
<comment type="catalytic activity">
    <reaction evidence="1">
        <text>4-CDP-2-C-methyl-D-erythritol 2-phosphate = 2-C-methyl-D-erythritol 2,4-cyclic diphosphate + CMP</text>
        <dbReference type="Rhea" id="RHEA:23864"/>
        <dbReference type="ChEBI" id="CHEBI:57919"/>
        <dbReference type="ChEBI" id="CHEBI:58483"/>
        <dbReference type="ChEBI" id="CHEBI:60377"/>
        <dbReference type="EC" id="4.6.1.12"/>
    </reaction>
</comment>
<comment type="cofactor">
    <cofactor evidence="1">
        <name>a divalent metal cation</name>
        <dbReference type="ChEBI" id="CHEBI:60240"/>
    </cofactor>
    <text evidence="1">Binds 1 divalent metal cation per subunit.</text>
</comment>
<comment type="pathway">
    <text evidence="1">Isoprenoid biosynthesis; isopentenyl diphosphate biosynthesis via DXP pathway; isopentenyl diphosphate from 1-deoxy-D-xylulose 5-phosphate: step 4/6.</text>
</comment>
<comment type="subunit">
    <text evidence="1">Homotrimer.</text>
</comment>
<comment type="similarity">
    <text evidence="1">Belongs to the IspF family.</text>
</comment>
<protein>
    <recommendedName>
        <fullName evidence="1">2-C-methyl-D-erythritol 2,4-cyclodiphosphate synthase</fullName>
        <shortName evidence="1">MECDP-synthase</shortName>
        <shortName evidence="1">MECPP-synthase</shortName>
        <shortName evidence="1">MECPS</shortName>
        <ecNumber evidence="1">4.6.1.12</ecNumber>
    </recommendedName>
</protein>
<evidence type="ECO:0000255" key="1">
    <source>
        <dbReference type="HAMAP-Rule" id="MF_00107"/>
    </source>
</evidence>
<sequence length="152" mass="16532">MRIGYGEDSHRLEEGRPLYLCGLLIPSPVGALAHSDGDAALHALTDALLSAYGLGDIGLLFPDTDPRWRGERSEVFLREALRLVEARGARLLQASLVLTLDRPKLGPHRKALVDSLARLLRLPQDRIGLTFKTSEGLAPSHVQARAVVLLDG</sequence>
<organism>
    <name type="scientific">Thermus thermophilus (strain ATCC BAA-163 / DSM 7039 / HB27)</name>
    <dbReference type="NCBI Taxonomy" id="262724"/>
    <lineage>
        <taxon>Bacteria</taxon>
        <taxon>Thermotogati</taxon>
        <taxon>Deinococcota</taxon>
        <taxon>Deinococci</taxon>
        <taxon>Thermales</taxon>
        <taxon>Thermaceae</taxon>
        <taxon>Thermus</taxon>
    </lineage>
</organism>